<feature type="chain" id="PRO_0000105717" description="Nodulation protein D">
    <location>
        <begin position="1"/>
        <end position="303"/>
    </location>
</feature>
<feature type="domain" description="HTH lysR-type" evidence="1">
    <location>
        <begin position="6"/>
        <end position="63"/>
    </location>
</feature>
<feature type="DNA-binding region" description="H-T-H motif" evidence="1">
    <location>
        <begin position="23"/>
        <end position="42"/>
    </location>
</feature>
<accession>P04681</accession>
<gene>
    <name type="primary">nodD</name>
</gene>
<protein>
    <recommendedName>
        <fullName>Nodulation protein D</fullName>
    </recommendedName>
</protein>
<dbReference type="EMBL" id="Y00548">
    <property type="protein sequence ID" value="CAA68622.1"/>
    <property type="molecule type" value="Genomic_DNA"/>
</dbReference>
<dbReference type="PIR" id="A25095">
    <property type="entry name" value="A25095"/>
</dbReference>
<dbReference type="SMR" id="P04681"/>
<dbReference type="GO" id="GO:0003677">
    <property type="term" value="F:DNA binding"/>
    <property type="evidence" value="ECO:0007669"/>
    <property type="project" value="UniProtKB-KW"/>
</dbReference>
<dbReference type="GO" id="GO:0003700">
    <property type="term" value="F:DNA-binding transcription factor activity"/>
    <property type="evidence" value="ECO:0007669"/>
    <property type="project" value="InterPro"/>
</dbReference>
<dbReference type="CDD" id="cd08462">
    <property type="entry name" value="PBP2_NodD"/>
    <property type="match status" value="1"/>
</dbReference>
<dbReference type="Gene3D" id="3.40.190.10">
    <property type="entry name" value="Periplasmic binding protein-like II"/>
    <property type="match status" value="2"/>
</dbReference>
<dbReference type="Gene3D" id="1.10.10.10">
    <property type="entry name" value="Winged helix-like DNA-binding domain superfamily/Winged helix DNA-binding domain"/>
    <property type="match status" value="1"/>
</dbReference>
<dbReference type="InterPro" id="IPR050389">
    <property type="entry name" value="LysR-type_TF"/>
</dbReference>
<dbReference type="InterPro" id="IPR005119">
    <property type="entry name" value="LysR_subst-bd"/>
</dbReference>
<dbReference type="InterPro" id="IPR037416">
    <property type="entry name" value="NodD_PBP2"/>
</dbReference>
<dbReference type="InterPro" id="IPR000847">
    <property type="entry name" value="Tscrpt_reg_HTH_LysR"/>
</dbReference>
<dbReference type="InterPro" id="IPR036388">
    <property type="entry name" value="WH-like_DNA-bd_sf"/>
</dbReference>
<dbReference type="InterPro" id="IPR036390">
    <property type="entry name" value="WH_DNA-bd_sf"/>
</dbReference>
<dbReference type="PANTHER" id="PTHR30118:SF6">
    <property type="entry name" value="HTH-TYPE TRANSCRIPTIONAL REGULATOR LEUO"/>
    <property type="match status" value="1"/>
</dbReference>
<dbReference type="PANTHER" id="PTHR30118">
    <property type="entry name" value="HTH-TYPE TRANSCRIPTIONAL REGULATOR LEUO-RELATED"/>
    <property type="match status" value="1"/>
</dbReference>
<dbReference type="Pfam" id="PF00126">
    <property type="entry name" value="HTH_1"/>
    <property type="match status" value="1"/>
</dbReference>
<dbReference type="Pfam" id="PF03466">
    <property type="entry name" value="LysR_substrate"/>
    <property type="match status" value="1"/>
</dbReference>
<dbReference type="PRINTS" id="PR00039">
    <property type="entry name" value="HTHLYSR"/>
</dbReference>
<dbReference type="SUPFAM" id="SSF53850">
    <property type="entry name" value="Periplasmic binding protein-like II"/>
    <property type="match status" value="1"/>
</dbReference>
<dbReference type="SUPFAM" id="SSF46785">
    <property type="entry name" value="Winged helix' DNA-binding domain"/>
    <property type="match status" value="1"/>
</dbReference>
<dbReference type="PROSITE" id="PS50931">
    <property type="entry name" value="HTH_LYSR"/>
    <property type="match status" value="1"/>
</dbReference>
<proteinExistence type="inferred from homology"/>
<keyword id="KW-0010">Activator</keyword>
<keyword id="KW-0238">DNA-binding</keyword>
<keyword id="KW-0536">Nodulation</keyword>
<keyword id="KW-0614">Plasmid</keyword>
<keyword id="KW-0678">Repressor</keyword>
<keyword id="KW-0804">Transcription</keyword>
<keyword id="KW-0805">Transcription regulation</keyword>
<organism>
    <name type="scientific">Rhizobium leguminosarum bv. viciae</name>
    <dbReference type="NCBI Taxonomy" id="387"/>
    <lineage>
        <taxon>Bacteria</taxon>
        <taxon>Pseudomonadati</taxon>
        <taxon>Pseudomonadota</taxon>
        <taxon>Alphaproteobacteria</taxon>
        <taxon>Hyphomicrobiales</taxon>
        <taxon>Rhizobiaceae</taxon>
        <taxon>Rhizobium/Agrobacterium group</taxon>
        <taxon>Rhizobium</taxon>
    </lineage>
</organism>
<sequence length="303" mass="34487">MRFKGLDLNLLVALDALMTERKLTAAARSINLSQPAMSAAISRLRDYFRDDLFIMQRRELVPTPRAEALAPAVREALLHIQLSVIAWDPINPAESDRRFRIILSDFMALVFFDKIILRLAREAPGVSFELLPLDDDPEELLRRGDVDFLILPDLFMSGAHPKARLFEERLVCVGCPTNEQLQGQLSLEQYMSMGHVAAKFGRGLKPSVEQWLLMQHGLKRRIELVVPGFNLIPPLLSGTNRIATIPLRLVKHYERTIPLRIIEHPLPLVSFTEAVQWPALHNTDPGNIWMREIMIQEALRIGI</sequence>
<name>NODD_RHILV</name>
<comment type="function">
    <text>NodD regulates the expression of the nodABCFE genes which encode other nodulation proteins. NodD is also a negative regulator of its own expression. Binds flavonoids as inducers.</text>
</comment>
<comment type="similarity">
    <text evidence="2">Belongs to the LysR transcriptional regulatory family.</text>
</comment>
<evidence type="ECO:0000255" key="1">
    <source>
        <dbReference type="PROSITE-ProRule" id="PRU00253"/>
    </source>
</evidence>
<evidence type="ECO:0000305" key="2"/>
<geneLocation type="plasmid">
    <name>sym pRL1JI</name>
</geneLocation>
<reference key="1">
    <citation type="journal article" date="1986" name="EMBO J.">
        <title>The Rhizobium leguminosarum nodulation gene nodF encodes a polypeptide similar to acyl-carrier protein and is regulated by nodD plus a factor in pea root exudate.</title>
        <authorList>
            <person name="Shearman C.A."/>
            <person name="Rossen L."/>
            <person name="Johnston A.W.B."/>
            <person name="Downie J.A."/>
        </authorList>
    </citation>
    <scope>NUCLEOTIDE SEQUENCE [GENOMIC DNA]</scope>
    <source>
        <strain>248</strain>
    </source>
</reference>